<sequence>MRAAEERKGVVPAARRRDQFPVGMRVLAVDDDPVCLKVLETLLLRCQYHVTTTNQAAIALKMLRENRDMFDLVISDVHMPDMDGFKLLELVGLEMDLPVIMLSVNGETKTVLKGITHGACDYLLKPVRIEELRNIWQHVIRRKFSTRDRANLDFYEECNKPPNADSDHVHGHVTCGSPDQSGRPSKKRKEYCSEEEDEGEVNTQDIDDPSAPKKPRVVWSVELHRKFVAAVNQLGIDKAVPKRILELMNVEKLTRENVASHLQKYRLYLKRLSAVASQQVSIVAALGGRDPFLHMGGFEGLQGYQAFTSSAALSSFTPHGLLNSPRNNPAALGTQGVPASKSIQTMSGSHTLSHSINDANKYHLSLPGNQKGNLGQGLATSLGQTQMQQKWIHEETDDLSTILSGNGLSNGMSGTLQSVTSSPLLPQELAECTQAKIVSQPSIRTSSVSSEHIEGAVGVSSGLLESRVSQQSTIPLSGFSANGLLIHGSFNNTCANKLGGTSSSCAPARSSNDLMVARDTKGGASSFGGAMLLPPDTEQKYLNFGGGNGLKQKFDDRTADSLFDLKFVWSSVPSSQLASNIGAHHAMSQRWNNSSSNSSNIGARMIGQATSSGSTVIPQMKTDFLVSGDMAMPKNASDLSIPKLQSELSSSSCSFDGLLNSIVKVEKDDVTFSDDLGCGDFYSLGACI</sequence>
<evidence type="ECO:0000250" key="1">
    <source>
        <dbReference type="UniProtKB" id="Q940D0"/>
    </source>
</evidence>
<evidence type="ECO:0000255" key="2">
    <source>
        <dbReference type="PROSITE-ProRule" id="PRU00169"/>
    </source>
</evidence>
<evidence type="ECO:0000255" key="3">
    <source>
        <dbReference type="PROSITE-ProRule" id="PRU00625"/>
    </source>
</evidence>
<evidence type="ECO:0000256" key="4">
    <source>
        <dbReference type="SAM" id="MobiDB-lite"/>
    </source>
</evidence>
<evidence type="ECO:0000269" key="5">
    <source>
    </source>
</evidence>
<evidence type="ECO:0000269" key="6">
    <source>
    </source>
</evidence>
<evidence type="ECO:0000303" key="7">
    <source>
    </source>
</evidence>
<evidence type="ECO:0000303" key="8">
    <source>
    </source>
</evidence>
<evidence type="ECO:0000303" key="9">
    <source>
    </source>
</evidence>
<evidence type="ECO:0000305" key="10"/>
<evidence type="ECO:0000312" key="11">
    <source>
        <dbReference type="EMBL" id="BAD19083.1"/>
    </source>
</evidence>
<evidence type="ECO:0000312" key="12">
    <source>
        <dbReference type="EMBL" id="BAD19284.1"/>
    </source>
</evidence>
<evidence type="ECO:0000312" key="13">
    <source>
        <dbReference type="EMBL" id="BAF10303.1"/>
    </source>
</evidence>
<evidence type="ECO:0000312" key="14">
    <source>
        <dbReference type="EMBL" id="EEE57977.1"/>
    </source>
</evidence>
<protein>
    <recommendedName>
        <fullName evidence="10">Two-component response regulator ORR23</fullName>
    </recommendedName>
    <alternativeName>
        <fullName evidence="7">OsRRB5</fullName>
    </alternativeName>
</protein>
<organism>
    <name type="scientific">Oryza sativa subsp. japonica</name>
    <name type="common">Rice</name>
    <dbReference type="NCBI Taxonomy" id="39947"/>
    <lineage>
        <taxon>Eukaryota</taxon>
        <taxon>Viridiplantae</taxon>
        <taxon>Streptophyta</taxon>
        <taxon>Embryophyta</taxon>
        <taxon>Tracheophyta</taxon>
        <taxon>Spermatophyta</taxon>
        <taxon>Magnoliopsida</taxon>
        <taxon>Liliopsida</taxon>
        <taxon>Poales</taxon>
        <taxon>Poaceae</taxon>
        <taxon>BOP clade</taxon>
        <taxon>Oryzoideae</taxon>
        <taxon>Oryzeae</taxon>
        <taxon>Oryzinae</taxon>
        <taxon>Oryza</taxon>
        <taxon>Oryza sativa</taxon>
    </lineage>
</organism>
<accession>Q6K8X6</accession>
<accession>A0A0P0VQP7</accession>
<dbReference type="EMBL" id="BR000252">
    <property type="protein sequence ID" value="FAA00256.1"/>
    <property type="molecule type" value="Genomic_DNA"/>
</dbReference>
<dbReference type="EMBL" id="AP003975">
    <property type="protein sequence ID" value="BAD19083.1"/>
    <property type="molecule type" value="Genomic_DNA"/>
</dbReference>
<dbReference type="EMBL" id="AP004094">
    <property type="protein sequence ID" value="BAD19284.1"/>
    <property type="molecule type" value="Genomic_DNA"/>
</dbReference>
<dbReference type="EMBL" id="AP008208">
    <property type="protein sequence ID" value="BAF10303.1"/>
    <property type="molecule type" value="Genomic_DNA"/>
</dbReference>
<dbReference type="EMBL" id="AP014958">
    <property type="protein sequence ID" value="BAS81367.1"/>
    <property type="molecule type" value="Genomic_DNA"/>
</dbReference>
<dbReference type="EMBL" id="CM000139">
    <property type="protein sequence ID" value="EEE57977.1"/>
    <property type="molecule type" value="Genomic_DNA"/>
</dbReference>
<dbReference type="EMBL" id="AK099581">
    <property type="protein sequence ID" value="BAG94206.1"/>
    <property type="molecule type" value="mRNA"/>
</dbReference>
<dbReference type="EMBL" id="AK120648">
    <property type="protein sequence ID" value="BAH00108.1"/>
    <property type="molecule type" value="mRNA"/>
</dbReference>
<dbReference type="RefSeq" id="XP_015625496.1">
    <property type="nucleotide sequence ID" value="XM_015770010.1"/>
</dbReference>
<dbReference type="SMR" id="Q6K8X6"/>
<dbReference type="FunCoup" id="Q6K8X6">
    <property type="interactions" value="815"/>
</dbReference>
<dbReference type="STRING" id="39947.Q6K8X6"/>
<dbReference type="PaxDb" id="39947-Q6K8X6"/>
<dbReference type="EnsemblPlants" id="Os02t0796500-01">
    <property type="protein sequence ID" value="Os02t0796500-01"/>
    <property type="gene ID" value="Os02g0796500"/>
</dbReference>
<dbReference type="EnsemblPlants" id="Os02t0796500-02">
    <property type="protein sequence ID" value="Os02t0796500-02"/>
    <property type="gene ID" value="Os02g0796500"/>
</dbReference>
<dbReference type="EnsemblPlants" id="Os02t0796500-03">
    <property type="protein sequence ID" value="Os02t0796500-03"/>
    <property type="gene ID" value="Os02g0796500"/>
</dbReference>
<dbReference type="Gramene" id="Os02t0796500-01">
    <property type="protein sequence ID" value="Os02t0796500-01"/>
    <property type="gene ID" value="Os02g0796500"/>
</dbReference>
<dbReference type="Gramene" id="Os02t0796500-02">
    <property type="protein sequence ID" value="Os02t0796500-02"/>
    <property type="gene ID" value="Os02g0796500"/>
</dbReference>
<dbReference type="Gramene" id="Os02t0796500-03">
    <property type="protein sequence ID" value="Os02t0796500-03"/>
    <property type="gene ID" value="Os02g0796500"/>
</dbReference>
<dbReference type="KEGG" id="dosa:Os02g0796500"/>
<dbReference type="eggNOG" id="KOG1601">
    <property type="taxonomic scope" value="Eukaryota"/>
</dbReference>
<dbReference type="HOGENOM" id="CLU_024359_0_0_1"/>
<dbReference type="InParanoid" id="Q6K8X6"/>
<dbReference type="OMA" id="AECTQAK"/>
<dbReference type="OrthoDB" id="60033at2759"/>
<dbReference type="Proteomes" id="UP000000763">
    <property type="component" value="Chromosome 2"/>
</dbReference>
<dbReference type="Proteomes" id="UP000007752">
    <property type="component" value="Chromosome 2"/>
</dbReference>
<dbReference type="Proteomes" id="UP000059680">
    <property type="component" value="Chromosome 2"/>
</dbReference>
<dbReference type="GO" id="GO:0005634">
    <property type="term" value="C:nucleus"/>
    <property type="evidence" value="ECO:0000314"/>
    <property type="project" value="UniProtKB"/>
</dbReference>
<dbReference type="GO" id="GO:0003677">
    <property type="term" value="F:DNA binding"/>
    <property type="evidence" value="ECO:0007669"/>
    <property type="project" value="UniProtKB-KW"/>
</dbReference>
<dbReference type="GO" id="GO:0003700">
    <property type="term" value="F:DNA-binding transcription factor activity"/>
    <property type="evidence" value="ECO:0007669"/>
    <property type="project" value="InterPro"/>
</dbReference>
<dbReference type="GO" id="GO:0009736">
    <property type="term" value="P:cytokinin-activated signaling pathway"/>
    <property type="evidence" value="ECO:0007669"/>
    <property type="project" value="UniProtKB-KW"/>
</dbReference>
<dbReference type="GO" id="GO:0000160">
    <property type="term" value="P:phosphorelay signal transduction system"/>
    <property type="evidence" value="ECO:0007669"/>
    <property type="project" value="UniProtKB-KW"/>
</dbReference>
<dbReference type="CDD" id="cd17584">
    <property type="entry name" value="REC_typeB_ARR-like"/>
    <property type="match status" value="1"/>
</dbReference>
<dbReference type="FunFam" id="1.10.10.60:FF:000007">
    <property type="entry name" value="Two-component response regulator"/>
    <property type="match status" value="1"/>
</dbReference>
<dbReference type="FunFam" id="3.40.50.2300:FF:000132">
    <property type="entry name" value="Two-component response regulator"/>
    <property type="match status" value="1"/>
</dbReference>
<dbReference type="Gene3D" id="3.40.50.2300">
    <property type="match status" value="1"/>
</dbReference>
<dbReference type="Gene3D" id="1.10.10.60">
    <property type="entry name" value="Homeodomain-like"/>
    <property type="match status" value="1"/>
</dbReference>
<dbReference type="InterPro" id="IPR045279">
    <property type="entry name" value="ARR-like"/>
</dbReference>
<dbReference type="InterPro" id="IPR011006">
    <property type="entry name" value="CheY-like_superfamily"/>
</dbReference>
<dbReference type="InterPro" id="IPR009057">
    <property type="entry name" value="Homeodomain-like_sf"/>
</dbReference>
<dbReference type="InterPro" id="IPR017930">
    <property type="entry name" value="Myb_dom"/>
</dbReference>
<dbReference type="InterPro" id="IPR006447">
    <property type="entry name" value="Myb_dom_plants"/>
</dbReference>
<dbReference type="InterPro" id="IPR017053">
    <property type="entry name" value="Response_reg_B-typ_pln"/>
</dbReference>
<dbReference type="InterPro" id="IPR001005">
    <property type="entry name" value="SANT/Myb"/>
</dbReference>
<dbReference type="InterPro" id="IPR001789">
    <property type="entry name" value="Sig_transdc_resp-reg_receiver"/>
</dbReference>
<dbReference type="NCBIfam" id="TIGR01557">
    <property type="entry name" value="myb_SHAQKYF"/>
    <property type="match status" value="1"/>
</dbReference>
<dbReference type="PANTHER" id="PTHR43874">
    <property type="entry name" value="TWO-COMPONENT RESPONSE REGULATOR"/>
    <property type="match status" value="1"/>
</dbReference>
<dbReference type="PANTHER" id="PTHR43874:SF205">
    <property type="entry name" value="TWO-COMPONENT RESPONSE REGULATOR ORR23"/>
    <property type="match status" value="1"/>
</dbReference>
<dbReference type="Pfam" id="PF00249">
    <property type="entry name" value="Myb_DNA-binding"/>
    <property type="match status" value="1"/>
</dbReference>
<dbReference type="Pfam" id="PF00072">
    <property type="entry name" value="Response_reg"/>
    <property type="match status" value="1"/>
</dbReference>
<dbReference type="PIRSF" id="PIRSF036392">
    <property type="entry name" value="RR_ARR_type-B"/>
    <property type="match status" value="1"/>
</dbReference>
<dbReference type="SMART" id="SM00448">
    <property type="entry name" value="REC"/>
    <property type="match status" value="1"/>
</dbReference>
<dbReference type="SUPFAM" id="SSF52172">
    <property type="entry name" value="CheY-like"/>
    <property type="match status" value="1"/>
</dbReference>
<dbReference type="SUPFAM" id="SSF46689">
    <property type="entry name" value="Homeodomain-like"/>
    <property type="match status" value="1"/>
</dbReference>
<dbReference type="PROSITE" id="PS51294">
    <property type="entry name" value="HTH_MYB"/>
    <property type="match status" value="1"/>
</dbReference>
<dbReference type="PROSITE" id="PS50110">
    <property type="entry name" value="RESPONSE_REGULATORY"/>
    <property type="match status" value="1"/>
</dbReference>
<reference key="1">
    <citation type="journal article" date="2006" name="Gene">
        <title>Identification and characterization of cytokinin-signalling gene families in rice.</title>
        <authorList>
            <person name="Ito Y."/>
            <person name="Kurata N."/>
        </authorList>
    </citation>
    <scope>NUCLEOTIDE SEQUENCE [GENOMIC DNA]</scope>
    <source>
        <strain>cv. Nipponbare</strain>
    </source>
</reference>
<reference key="2">
    <citation type="journal article" date="2005" name="Nature">
        <title>The map-based sequence of the rice genome.</title>
        <authorList>
            <consortium name="International rice genome sequencing project (IRGSP)"/>
        </authorList>
    </citation>
    <scope>NUCLEOTIDE SEQUENCE [LARGE SCALE GENOMIC DNA]</scope>
    <source>
        <strain>cv. Nipponbare</strain>
    </source>
</reference>
<reference key="3">
    <citation type="journal article" date="2008" name="Nucleic Acids Res.">
        <title>The rice annotation project database (RAP-DB): 2008 update.</title>
        <authorList>
            <consortium name="The rice annotation project (RAP)"/>
        </authorList>
    </citation>
    <scope>GENOME REANNOTATION</scope>
    <source>
        <strain>cv. Nipponbare</strain>
    </source>
</reference>
<reference key="4">
    <citation type="journal article" date="2013" name="Rice">
        <title>Improvement of the Oryza sativa Nipponbare reference genome using next generation sequence and optical map data.</title>
        <authorList>
            <person name="Kawahara Y."/>
            <person name="de la Bastide M."/>
            <person name="Hamilton J.P."/>
            <person name="Kanamori H."/>
            <person name="McCombie W.R."/>
            <person name="Ouyang S."/>
            <person name="Schwartz D.C."/>
            <person name="Tanaka T."/>
            <person name="Wu J."/>
            <person name="Zhou S."/>
            <person name="Childs K.L."/>
            <person name="Davidson R.M."/>
            <person name="Lin H."/>
            <person name="Quesada-Ocampo L."/>
            <person name="Vaillancourt B."/>
            <person name="Sakai H."/>
            <person name="Lee S.S."/>
            <person name="Kim J."/>
            <person name="Numa H."/>
            <person name="Itoh T."/>
            <person name="Buell C.R."/>
            <person name="Matsumoto T."/>
        </authorList>
    </citation>
    <scope>GENOME REANNOTATION</scope>
    <source>
        <strain>cv. Nipponbare</strain>
    </source>
</reference>
<reference key="5">
    <citation type="journal article" date="2005" name="PLoS Biol.">
        <title>The genomes of Oryza sativa: a history of duplications.</title>
        <authorList>
            <person name="Yu J."/>
            <person name="Wang J."/>
            <person name="Lin W."/>
            <person name="Li S."/>
            <person name="Li H."/>
            <person name="Zhou J."/>
            <person name="Ni P."/>
            <person name="Dong W."/>
            <person name="Hu S."/>
            <person name="Zeng C."/>
            <person name="Zhang J."/>
            <person name="Zhang Y."/>
            <person name="Li R."/>
            <person name="Xu Z."/>
            <person name="Li S."/>
            <person name="Li X."/>
            <person name="Zheng H."/>
            <person name="Cong L."/>
            <person name="Lin L."/>
            <person name="Yin J."/>
            <person name="Geng J."/>
            <person name="Li G."/>
            <person name="Shi J."/>
            <person name="Liu J."/>
            <person name="Lv H."/>
            <person name="Li J."/>
            <person name="Wang J."/>
            <person name="Deng Y."/>
            <person name="Ran L."/>
            <person name="Shi X."/>
            <person name="Wang X."/>
            <person name="Wu Q."/>
            <person name="Li C."/>
            <person name="Ren X."/>
            <person name="Wang J."/>
            <person name="Wang X."/>
            <person name="Li D."/>
            <person name="Liu D."/>
            <person name="Zhang X."/>
            <person name="Ji Z."/>
            <person name="Zhao W."/>
            <person name="Sun Y."/>
            <person name="Zhang Z."/>
            <person name="Bao J."/>
            <person name="Han Y."/>
            <person name="Dong L."/>
            <person name="Ji J."/>
            <person name="Chen P."/>
            <person name="Wu S."/>
            <person name="Liu J."/>
            <person name="Xiao Y."/>
            <person name="Bu D."/>
            <person name="Tan J."/>
            <person name="Yang L."/>
            <person name="Ye C."/>
            <person name="Zhang J."/>
            <person name="Xu J."/>
            <person name="Zhou Y."/>
            <person name="Yu Y."/>
            <person name="Zhang B."/>
            <person name="Zhuang S."/>
            <person name="Wei H."/>
            <person name="Liu B."/>
            <person name="Lei M."/>
            <person name="Yu H."/>
            <person name="Li Y."/>
            <person name="Xu H."/>
            <person name="Wei S."/>
            <person name="He X."/>
            <person name="Fang L."/>
            <person name="Zhang Z."/>
            <person name="Zhang Y."/>
            <person name="Huang X."/>
            <person name="Su Z."/>
            <person name="Tong W."/>
            <person name="Li J."/>
            <person name="Tong Z."/>
            <person name="Li S."/>
            <person name="Ye J."/>
            <person name="Wang L."/>
            <person name="Fang L."/>
            <person name="Lei T."/>
            <person name="Chen C.-S."/>
            <person name="Chen H.-C."/>
            <person name="Xu Z."/>
            <person name="Li H."/>
            <person name="Huang H."/>
            <person name="Zhang F."/>
            <person name="Xu H."/>
            <person name="Li N."/>
            <person name="Zhao C."/>
            <person name="Li S."/>
            <person name="Dong L."/>
            <person name="Huang Y."/>
            <person name="Li L."/>
            <person name="Xi Y."/>
            <person name="Qi Q."/>
            <person name="Li W."/>
            <person name="Zhang B."/>
            <person name="Hu W."/>
            <person name="Zhang Y."/>
            <person name="Tian X."/>
            <person name="Jiao Y."/>
            <person name="Liang X."/>
            <person name="Jin J."/>
            <person name="Gao L."/>
            <person name="Zheng W."/>
            <person name="Hao B."/>
            <person name="Liu S.-M."/>
            <person name="Wang W."/>
            <person name="Yuan L."/>
            <person name="Cao M."/>
            <person name="McDermott J."/>
            <person name="Samudrala R."/>
            <person name="Wang J."/>
            <person name="Wong G.K.-S."/>
            <person name="Yang H."/>
        </authorList>
    </citation>
    <scope>NUCLEOTIDE SEQUENCE [LARGE SCALE GENOMIC DNA]</scope>
    <source>
        <strain>cv. Nipponbare</strain>
    </source>
</reference>
<reference key="6">
    <citation type="journal article" date="2003" name="Science">
        <title>Collection, mapping, and annotation of over 28,000 cDNA clones from japonica rice.</title>
        <authorList>
            <consortium name="The rice full-length cDNA consortium"/>
        </authorList>
    </citation>
    <scope>NUCLEOTIDE SEQUENCE [LARGE SCALE MRNA]</scope>
    <source>
        <strain>cv. Nipponbare</strain>
    </source>
</reference>
<reference key="7">
    <citation type="journal article" date="2006" name="Plant Physiol.">
        <title>Whole-genome analysis of Oryza sativa reveals similar architecture of two-component signaling machinery with Arabidopsis.</title>
        <authorList>
            <person name="Pareek A."/>
            <person name="Singh A."/>
            <person name="Kumar M."/>
            <person name="Kushwaha H.R."/>
            <person name="Lynn A.M."/>
            <person name="Singla-Pareek S.L."/>
        </authorList>
    </citation>
    <scope>DISRUPTION PHENOTYPE</scope>
</reference>
<reference key="8">
    <citation type="journal article" date="2007" name="Plant Physiol.">
        <title>Nomenclature for two-component signaling elements of rice.</title>
        <authorList>
            <person name="Schaller G.E."/>
            <person name="Doi K."/>
            <person name="Hwang I."/>
            <person name="Kieber J.J."/>
            <person name="Khurana J.P."/>
            <person name="Kurata N."/>
            <person name="Mizuno T."/>
            <person name="Pareek A."/>
            <person name="Shiu S.H."/>
            <person name="Wu P."/>
            <person name="Yip W.K."/>
        </authorList>
    </citation>
    <scope>GENE FAMILY</scope>
    <scope>NOMENCLATURE</scope>
</reference>
<reference key="9">
    <citation type="journal article" date="2012" name="Plant Physiol.">
        <title>Characterization of genes involved in cytokinin signaling and metabolism from rice.</title>
        <authorList>
            <person name="Tsai Y.C."/>
            <person name="Weir N.R."/>
            <person name="Hill K."/>
            <person name="Zhang W."/>
            <person name="Kim H.J."/>
            <person name="Shiu S.H."/>
            <person name="Schaller G.E."/>
            <person name="Kieber J.J."/>
        </authorList>
    </citation>
    <scope>SUBCELLULAR LOCATION</scope>
</reference>
<proteinExistence type="evidence at transcript level"/>
<name>ORR23_ORYSJ</name>
<feature type="chain" id="PRO_0000433844" description="Two-component response regulator ORR23">
    <location>
        <begin position="1"/>
        <end position="688"/>
    </location>
</feature>
<feature type="domain" description="Response regulatory" evidence="2">
    <location>
        <begin position="25"/>
        <end position="140"/>
    </location>
</feature>
<feature type="DNA-binding region" description="Myb-like GARP" evidence="3">
    <location>
        <begin position="211"/>
        <end position="270"/>
    </location>
</feature>
<feature type="region of interest" description="Disordered" evidence="4">
    <location>
        <begin position="161"/>
        <end position="212"/>
    </location>
</feature>
<feature type="compositionally biased region" description="Acidic residues" evidence="4">
    <location>
        <begin position="193"/>
        <end position="208"/>
    </location>
</feature>
<feature type="modified residue" description="4-aspartylphosphate" evidence="2">
    <location>
        <position position="76"/>
    </location>
</feature>
<gene>
    <name evidence="9" type="primary">RR23</name>
    <name evidence="8" type="synonym">ORR3</name>
    <name evidence="13" type="ordered locus">Os02g0796500</name>
    <name evidence="10" type="ordered locus">LOC_Os02g55320</name>
    <name evidence="11" type="ORF">OJ1004_E04.14</name>
    <name evidence="12" type="ORF">OJ1695_H09.29</name>
    <name evidence="14" type="ORF">OsJ_08721</name>
</gene>
<comment type="function">
    <text evidence="1">Transcriptional activator that binds specific DNA sequence. Functions as a response regulator involved in His-to-Asp phosphorelay signal transduction system. Phosphorylation of the Asp residue in the receiver domain activates the ability of the protein to promote the transcription of target genes. May directly activate some type-A response regulators in response to cytokinins.</text>
</comment>
<comment type="subcellular location">
    <subcellularLocation>
        <location evidence="3 6">Nucleus</location>
    </subcellularLocation>
</comment>
<comment type="PTM">
    <text evidence="10">Two-component system major event consists of a His-to-Asp phosphorelay between a sensor histidine kinase (HK) and a response regulator (RR). In plants, the His-to-Asp phosphorelay involves an additional intermediate named Histidine-containing phosphotransfer protein (HPt). This multistep phosphorelay consists of a His-Asp-His-Asp sequential transfer of a phosphate group between first a His and an Asp of the HK protein, followed by the transfer to a conserved His of the HPt protein and finally the transfer to an Asp in the receiver domain of the RR protein.</text>
</comment>
<comment type="disruption phenotype">
    <text evidence="5">Dwarf, narrow leaf, low tillering, lesion mimic, late heading and low fertility phenotypes.</text>
</comment>
<comment type="similarity">
    <text evidence="10">Belongs to the ARR family. Type-B subfamily.</text>
</comment>
<keyword id="KW-0010">Activator</keyword>
<keyword id="KW-0932">Cytokinin signaling pathway</keyword>
<keyword id="KW-0238">DNA-binding</keyword>
<keyword id="KW-0539">Nucleus</keyword>
<keyword id="KW-0597">Phosphoprotein</keyword>
<keyword id="KW-1185">Reference proteome</keyword>
<keyword id="KW-0804">Transcription</keyword>
<keyword id="KW-0805">Transcription regulation</keyword>
<keyword id="KW-0902">Two-component regulatory system</keyword>